<gene>
    <name type="primary">ssb-b</name>
    <name type="synonym">lab1</name>
</gene>
<name>LAB_XENLA</name>
<keyword id="KW-0539">Nucleus</keyword>
<keyword id="KW-0597">Phosphoprotein</keyword>
<keyword id="KW-1185">Reference proteome</keyword>
<keyword id="KW-0694">RNA-binding</keyword>
<sequence>MAENGDKEQLDLDTKICEQIEYYFGDHNLPRDKFLKQQVLLDNGWVPLETMIKFNRLSKLTTDFNIILQALKKSKTELLEINEEKCKIRRSPAKPLPELNEDYKNSFKHRSVYIKGFPTITNLDEIKEWLNDKGPIENIQMRRTLQREFKGSVFLVFNTEDGAKKFLEDKNLKYKDNDMIILSREEYFAKKNEERKLNKSEEKAKSKQEKEEAQKQAEDAERKLMEERVGCLLKFSGDLDNMTSREDLHALFQTHGEIEWIDFSRGAKEGIVLFKMNAKEALDKAKAANNDNLKLKGKNVKWELIEGDAEKEALKKIMEGKQESFNKRKGRDGRKFKGKGRGGKGNDSSPRKKIQFQGKKKTFDSSDDEDDMEESESPQKVTIKAKETAGPKNGASAAPGSPKKRALDDKAEDGPAVKQSKTEVGDQ</sequence>
<reference key="1">
    <citation type="journal article" date="1993" name="J. Mol. Biol.">
        <title>La proteins from Xenopus laevis. cDNA cloning and developmental expression.</title>
        <authorList>
            <person name="Scherly D."/>
            <person name="Stutz F."/>
            <person name="Lin-Marq N."/>
            <person name="Clarkson S.G."/>
        </authorList>
    </citation>
    <scope>NUCLEOTIDE SEQUENCE [MRNA]</scope>
    <source>
        <tissue>Oocyte</tissue>
    </source>
</reference>
<accession>P28049</accession>
<protein>
    <recommendedName>
        <fullName>Lupus La protein homolog B</fullName>
    </recommendedName>
    <alternativeName>
        <fullName>La autoantigen homolog B</fullName>
    </alternativeName>
    <alternativeName>
        <fullName>La ribonucleoprotein B</fullName>
    </alternativeName>
</protein>
<dbReference type="EMBL" id="X68818">
    <property type="protein sequence ID" value="CAA48716.1"/>
    <property type="molecule type" value="mRNA"/>
</dbReference>
<dbReference type="PIR" id="S33817">
    <property type="entry name" value="S33817"/>
</dbReference>
<dbReference type="SMR" id="P28049"/>
<dbReference type="AGR" id="Xenbase:XB-GENE-866058"/>
<dbReference type="Xenbase" id="XB-GENE-866058">
    <property type="gene designation" value="ssb.L"/>
</dbReference>
<dbReference type="Proteomes" id="UP000186698">
    <property type="component" value="Unplaced"/>
</dbReference>
<dbReference type="GO" id="GO:0010494">
    <property type="term" value="C:cytoplasmic stress granule"/>
    <property type="evidence" value="ECO:0000318"/>
    <property type="project" value="GO_Central"/>
</dbReference>
<dbReference type="GO" id="GO:0005829">
    <property type="term" value="C:cytosol"/>
    <property type="evidence" value="ECO:0000318"/>
    <property type="project" value="GO_Central"/>
</dbReference>
<dbReference type="GO" id="GO:0005634">
    <property type="term" value="C:nucleus"/>
    <property type="evidence" value="ECO:0000318"/>
    <property type="project" value="GO_Central"/>
</dbReference>
<dbReference type="GO" id="GO:1990904">
    <property type="term" value="C:ribonucleoprotein complex"/>
    <property type="evidence" value="ECO:0007669"/>
    <property type="project" value="InterPro"/>
</dbReference>
<dbReference type="GO" id="GO:0003729">
    <property type="term" value="F:mRNA binding"/>
    <property type="evidence" value="ECO:0000318"/>
    <property type="project" value="GO_Central"/>
</dbReference>
<dbReference type="GO" id="GO:0045727">
    <property type="term" value="P:positive regulation of translation"/>
    <property type="evidence" value="ECO:0000318"/>
    <property type="project" value="GO_Central"/>
</dbReference>
<dbReference type="GO" id="GO:0008033">
    <property type="term" value="P:tRNA processing"/>
    <property type="evidence" value="ECO:0000318"/>
    <property type="project" value="GO_Central"/>
</dbReference>
<dbReference type="CDD" id="cd08028">
    <property type="entry name" value="LARP_3"/>
    <property type="match status" value="1"/>
</dbReference>
<dbReference type="CDD" id="cd12291">
    <property type="entry name" value="RRM1_La"/>
    <property type="match status" value="1"/>
</dbReference>
<dbReference type="CDD" id="cd12541">
    <property type="entry name" value="RRM2_La"/>
    <property type="match status" value="1"/>
</dbReference>
<dbReference type="Gene3D" id="3.30.70.330">
    <property type="match status" value="2"/>
</dbReference>
<dbReference type="Gene3D" id="1.10.10.10">
    <property type="entry name" value="Winged helix-like DNA-binding domain superfamily/Winged helix DNA-binding domain"/>
    <property type="match status" value="1"/>
</dbReference>
<dbReference type="InterPro" id="IPR045180">
    <property type="entry name" value="La_dom_prot"/>
</dbReference>
<dbReference type="InterPro" id="IPR006630">
    <property type="entry name" value="La_HTH"/>
</dbReference>
<dbReference type="InterPro" id="IPR014886">
    <property type="entry name" value="La_xRRM"/>
</dbReference>
<dbReference type="InterPro" id="IPR002344">
    <property type="entry name" value="Lupus_La"/>
</dbReference>
<dbReference type="InterPro" id="IPR012677">
    <property type="entry name" value="Nucleotide-bd_a/b_plait_sf"/>
</dbReference>
<dbReference type="InterPro" id="IPR035979">
    <property type="entry name" value="RBD_domain_sf"/>
</dbReference>
<dbReference type="InterPro" id="IPR000504">
    <property type="entry name" value="RRM_dom"/>
</dbReference>
<dbReference type="InterPro" id="IPR036388">
    <property type="entry name" value="WH-like_DNA-bd_sf"/>
</dbReference>
<dbReference type="InterPro" id="IPR036390">
    <property type="entry name" value="WH_DNA-bd_sf"/>
</dbReference>
<dbReference type="PANTHER" id="PTHR22792:SF166">
    <property type="entry name" value="LUPUS LA PROTEIN HOMOLOG"/>
    <property type="match status" value="1"/>
</dbReference>
<dbReference type="PANTHER" id="PTHR22792">
    <property type="entry name" value="LUPUS LA PROTEIN-RELATED"/>
    <property type="match status" value="1"/>
</dbReference>
<dbReference type="Pfam" id="PF05383">
    <property type="entry name" value="La"/>
    <property type="match status" value="1"/>
</dbReference>
<dbReference type="Pfam" id="PF00076">
    <property type="entry name" value="RRM_1"/>
    <property type="match status" value="1"/>
</dbReference>
<dbReference type="Pfam" id="PF08777">
    <property type="entry name" value="RRM_3"/>
    <property type="match status" value="1"/>
</dbReference>
<dbReference type="PRINTS" id="PR00302">
    <property type="entry name" value="LUPUSLA"/>
</dbReference>
<dbReference type="SMART" id="SM00715">
    <property type="entry name" value="LA"/>
    <property type="match status" value="1"/>
</dbReference>
<dbReference type="SMART" id="SM00360">
    <property type="entry name" value="RRM"/>
    <property type="match status" value="2"/>
</dbReference>
<dbReference type="SUPFAM" id="SSF54928">
    <property type="entry name" value="RNA-binding domain, RBD"/>
    <property type="match status" value="2"/>
</dbReference>
<dbReference type="SUPFAM" id="SSF46785">
    <property type="entry name" value="Winged helix' DNA-binding domain"/>
    <property type="match status" value="1"/>
</dbReference>
<dbReference type="PROSITE" id="PS50961">
    <property type="entry name" value="HTH_LA"/>
    <property type="match status" value="1"/>
</dbReference>
<dbReference type="PROSITE" id="PS50102">
    <property type="entry name" value="RRM"/>
    <property type="match status" value="1"/>
</dbReference>
<dbReference type="PROSITE" id="PS51939">
    <property type="entry name" value="XRRM"/>
    <property type="match status" value="1"/>
</dbReference>
<organism>
    <name type="scientific">Xenopus laevis</name>
    <name type="common">African clawed frog</name>
    <dbReference type="NCBI Taxonomy" id="8355"/>
    <lineage>
        <taxon>Eukaryota</taxon>
        <taxon>Metazoa</taxon>
        <taxon>Chordata</taxon>
        <taxon>Craniata</taxon>
        <taxon>Vertebrata</taxon>
        <taxon>Euteleostomi</taxon>
        <taxon>Amphibia</taxon>
        <taxon>Batrachia</taxon>
        <taxon>Anura</taxon>
        <taxon>Pipoidea</taxon>
        <taxon>Pipidae</taxon>
        <taxon>Xenopodinae</taxon>
        <taxon>Xenopus</taxon>
        <taxon>Xenopus</taxon>
    </lineage>
</organism>
<proteinExistence type="evidence at transcript level"/>
<comment type="function">
    <text evidence="1">La protein plays a role in the transcription of RNA polymerase III. It is most probably a transcription termination factor. Binds to the 3' termini of virtually all nascent polymerase III transcripts (By similarity).</text>
</comment>
<comment type="subcellular location">
    <subcellularLocation>
        <location evidence="7">Nucleus</location>
    </subcellularLocation>
</comment>
<comment type="developmental stage">
    <text>Barely detectable in stage I/II oocytes, accumulate in stage III/IV oocytes, then exhibit a roughly constant steady state level in mature oocytes, eggs, and early embryos.</text>
</comment>
<comment type="PTM">
    <text evidence="7">Phosphorylated.</text>
</comment>
<comment type="miscellaneous">
    <text>There are two forms of La, LaA and LaB, in Xenopus.</text>
</comment>
<evidence type="ECO:0000250" key="1"/>
<evidence type="ECO:0000255" key="2"/>
<evidence type="ECO:0000255" key="3">
    <source>
        <dbReference type="PROSITE-ProRule" id="PRU00176"/>
    </source>
</evidence>
<evidence type="ECO:0000255" key="4">
    <source>
        <dbReference type="PROSITE-ProRule" id="PRU00332"/>
    </source>
</evidence>
<evidence type="ECO:0000255" key="5">
    <source>
        <dbReference type="PROSITE-ProRule" id="PRU01288"/>
    </source>
</evidence>
<evidence type="ECO:0000256" key="6">
    <source>
        <dbReference type="SAM" id="MobiDB-lite"/>
    </source>
</evidence>
<evidence type="ECO:0000305" key="7"/>
<feature type="chain" id="PRO_0000207604" description="Lupus La protein homolog B">
    <location>
        <begin position="1"/>
        <end position="427"/>
    </location>
</feature>
<feature type="domain" description="HTH La-type RNA-binding" evidence="4">
    <location>
        <begin position="6"/>
        <end position="98"/>
    </location>
</feature>
<feature type="domain" description="RRM" evidence="3">
    <location>
        <begin position="110"/>
        <end position="202"/>
    </location>
</feature>
<feature type="domain" description="xRRM" evidence="5">
    <location>
        <begin position="226"/>
        <end position="348"/>
    </location>
</feature>
<feature type="region of interest" description="Disordered" evidence="6">
    <location>
        <begin position="193"/>
        <end position="220"/>
    </location>
</feature>
<feature type="region of interest" description="Disordered" evidence="6">
    <location>
        <begin position="319"/>
        <end position="427"/>
    </location>
</feature>
<feature type="short sequence motif" description="Nuclear localization signal" evidence="2">
    <location>
        <begin position="315"/>
        <end position="331"/>
    </location>
</feature>
<feature type="compositionally biased region" description="Basic residues" evidence="6">
    <location>
        <begin position="327"/>
        <end position="342"/>
    </location>
</feature>
<feature type="compositionally biased region" description="Basic residues" evidence="6">
    <location>
        <begin position="351"/>
        <end position="360"/>
    </location>
</feature>
<feature type="compositionally biased region" description="Acidic residues" evidence="6">
    <location>
        <begin position="365"/>
        <end position="376"/>
    </location>
</feature>
<feature type="compositionally biased region" description="Basic and acidic residues" evidence="6">
    <location>
        <begin position="405"/>
        <end position="427"/>
    </location>
</feature>